<feature type="chain" id="PRO_0000337966" description="Cell cycle protein GpsB">
    <location>
        <begin position="1"/>
        <end position="120"/>
    </location>
</feature>
<feature type="region of interest" description="Disordered" evidence="2">
    <location>
        <begin position="63"/>
        <end position="88"/>
    </location>
</feature>
<feature type="coiled-coil region" evidence="1">
    <location>
        <begin position="32"/>
        <end position="68"/>
    </location>
</feature>
<feature type="compositionally biased region" description="Low complexity" evidence="2">
    <location>
        <begin position="68"/>
        <end position="86"/>
    </location>
</feature>
<sequence>MASIIFTAKDIFDQDFKREVRGYSKSEVDEFLDDIIKDYETYAALVKELREENRRLKEELAAKPVEKAPVQPTQPVQSTQATQSTVESFSQMTSATNFDILKRLNRLEKEVFGKQILDRE</sequence>
<dbReference type="EMBL" id="CP000387">
    <property type="protein sequence ID" value="ABN45238.1"/>
    <property type="molecule type" value="Genomic_DNA"/>
</dbReference>
<dbReference type="RefSeq" id="WP_011837411.1">
    <property type="nucleotide sequence ID" value="NC_009009.1"/>
</dbReference>
<dbReference type="RefSeq" id="YP_001035788.1">
    <property type="nucleotide sequence ID" value="NC_009009.1"/>
</dbReference>
<dbReference type="SMR" id="A3CPY3"/>
<dbReference type="STRING" id="388919.SSA_1857"/>
<dbReference type="KEGG" id="ssa:SSA_1857"/>
<dbReference type="PATRIC" id="fig|388919.9.peg.1762"/>
<dbReference type="eggNOG" id="COG3599">
    <property type="taxonomic scope" value="Bacteria"/>
</dbReference>
<dbReference type="HOGENOM" id="CLU_140309_1_0_9"/>
<dbReference type="OrthoDB" id="389699at2"/>
<dbReference type="Proteomes" id="UP000002148">
    <property type="component" value="Chromosome"/>
</dbReference>
<dbReference type="GO" id="GO:0005737">
    <property type="term" value="C:cytoplasm"/>
    <property type="evidence" value="ECO:0007669"/>
    <property type="project" value="UniProtKB-SubCell"/>
</dbReference>
<dbReference type="GO" id="GO:0051301">
    <property type="term" value="P:cell division"/>
    <property type="evidence" value="ECO:0007669"/>
    <property type="project" value="UniProtKB-UniRule"/>
</dbReference>
<dbReference type="GO" id="GO:0008360">
    <property type="term" value="P:regulation of cell shape"/>
    <property type="evidence" value="ECO:0007669"/>
    <property type="project" value="UniProtKB-UniRule"/>
</dbReference>
<dbReference type="Gene3D" id="6.10.250.660">
    <property type="match status" value="1"/>
</dbReference>
<dbReference type="HAMAP" id="MF_02011">
    <property type="entry name" value="GpsB"/>
    <property type="match status" value="1"/>
</dbReference>
<dbReference type="InterPro" id="IPR011229">
    <property type="entry name" value="Cell_cycle_GpsB"/>
</dbReference>
<dbReference type="InterPro" id="IPR019933">
    <property type="entry name" value="DivIVA_domain"/>
</dbReference>
<dbReference type="InterPro" id="IPR007793">
    <property type="entry name" value="DivIVA_fam"/>
</dbReference>
<dbReference type="NCBIfam" id="TIGR03544">
    <property type="entry name" value="DivI1A_domain"/>
    <property type="match status" value="1"/>
</dbReference>
<dbReference type="NCBIfam" id="NF010725">
    <property type="entry name" value="PRK14127.1"/>
    <property type="match status" value="1"/>
</dbReference>
<dbReference type="PANTHER" id="PTHR35794:SF1">
    <property type="entry name" value="CELL CYCLE PROTEIN GPSB"/>
    <property type="match status" value="1"/>
</dbReference>
<dbReference type="PANTHER" id="PTHR35794">
    <property type="entry name" value="CELL DIVISION PROTEIN DIVIVA"/>
    <property type="match status" value="1"/>
</dbReference>
<dbReference type="Pfam" id="PF05103">
    <property type="entry name" value="DivIVA"/>
    <property type="match status" value="1"/>
</dbReference>
<dbReference type="PIRSF" id="PIRSF029938">
    <property type="entry name" value="UCP029938"/>
    <property type="match status" value="1"/>
</dbReference>
<name>GPSB_STRSV</name>
<proteinExistence type="inferred from homology"/>
<comment type="function">
    <text evidence="1">Divisome component that associates with the complex late in its assembly, after the Z-ring is formed, and is dependent on DivIC and PBP2B for its recruitment to the divisome. Together with EzrA, is a key component of the system that regulates PBP1 localization during cell cycle progression. Its main role could be the removal of PBP1 from the cell pole after pole maturation is completed. Also contributes to the recruitment of PBP1 to the division complex. Not essential for septum formation.</text>
</comment>
<comment type="subunit">
    <text evidence="1">Forms polymers through the coiled coil domains. Interacts with PBP1, MreC and EzrA.</text>
</comment>
<comment type="subcellular location">
    <subcellularLocation>
        <location evidence="1">Cytoplasm</location>
    </subcellularLocation>
    <text evidence="1">Shuttles between the lateral wall and the division site in a cell cycle-dependent manner.</text>
</comment>
<comment type="similarity">
    <text evidence="1">Belongs to the GpsB family.</text>
</comment>
<gene>
    <name evidence="1" type="primary">gpsB</name>
    <name type="ordered locus">SSA_1857</name>
</gene>
<keyword id="KW-0131">Cell cycle</keyword>
<keyword id="KW-0132">Cell division</keyword>
<keyword id="KW-0133">Cell shape</keyword>
<keyword id="KW-0175">Coiled coil</keyword>
<keyword id="KW-0963">Cytoplasm</keyword>
<keyword id="KW-1185">Reference proteome</keyword>
<protein>
    <recommendedName>
        <fullName evidence="1">Cell cycle protein GpsB</fullName>
    </recommendedName>
    <alternativeName>
        <fullName evidence="1">Guiding PBP1-shuttling protein</fullName>
    </alternativeName>
</protein>
<organism>
    <name type="scientific">Streptococcus sanguinis (strain SK36)</name>
    <dbReference type="NCBI Taxonomy" id="388919"/>
    <lineage>
        <taxon>Bacteria</taxon>
        <taxon>Bacillati</taxon>
        <taxon>Bacillota</taxon>
        <taxon>Bacilli</taxon>
        <taxon>Lactobacillales</taxon>
        <taxon>Streptococcaceae</taxon>
        <taxon>Streptococcus</taxon>
    </lineage>
</organism>
<evidence type="ECO:0000255" key="1">
    <source>
        <dbReference type="HAMAP-Rule" id="MF_02011"/>
    </source>
</evidence>
<evidence type="ECO:0000256" key="2">
    <source>
        <dbReference type="SAM" id="MobiDB-lite"/>
    </source>
</evidence>
<reference key="1">
    <citation type="journal article" date="2007" name="J. Bacteriol.">
        <title>Genome of the opportunistic pathogen Streptococcus sanguinis.</title>
        <authorList>
            <person name="Xu P."/>
            <person name="Alves J.M."/>
            <person name="Kitten T."/>
            <person name="Brown A."/>
            <person name="Chen Z."/>
            <person name="Ozaki L.S."/>
            <person name="Manque P."/>
            <person name="Ge X."/>
            <person name="Serrano M.G."/>
            <person name="Puiu D."/>
            <person name="Hendricks S."/>
            <person name="Wang Y."/>
            <person name="Chaplin M.D."/>
            <person name="Akan D."/>
            <person name="Paik S."/>
            <person name="Peterson D.L."/>
            <person name="Macrina F.L."/>
            <person name="Buck G.A."/>
        </authorList>
    </citation>
    <scope>NUCLEOTIDE SEQUENCE [LARGE SCALE GENOMIC DNA]</scope>
    <source>
        <strain>SK36</strain>
    </source>
</reference>
<accession>A3CPY3</accession>